<gene>
    <name evidence="1" type="primary">xseA</name>
    <name type="ordered locus">SeAg_B2661</name>
</gene>
<proteinExistence type="inferred from homology"/>
<accession>B5F187</accession>
<sequence>MLSSQTSSIFTVSRLNQTVRLLLEQEMGQVWISGEISNFTQPASGHWYFTLKDDTAQVRCAMFRNSNRRVTFRPQHGQQVLVRANITLYEPRGDYQIIAESMQPAGEGLLQQKYEQLKAKLHSEGLFDQQHKQPLPSPAHCVGVITSKTGAALHDILHVLKRRDPSLPVIIYPTAVQGDDAPGQIVRAIELANARGECDVLIVGRGGGSLEDLWSFNDERVARAIFASRIPVVSAVGHETDVTIADFVADLRAPTPSAAAEIVSRNQQELLRRIQSAQQRLGMAMDYYLANRSRRFTQIFHRLQQQHPQLRLARQQTALERLRQRMGFALEARIKQATQRQQRVSQRLSQQNPQPRIHRAQSRIQQLEYRLTENIRSRLSEQRERFGNAVTHLEAVSPLATLARGYTVSTTTNGKVLKKIKQVKAGDIMTTRLEDGWLESEVKSVTPGT</sequence>
<evidence type="ECO:0000255" key="1">
    <source>
        <dbReference type="HAMAP-Rule" id="MF_00378"/>
    </source>
</evidence>
<dbReference type="EC" id="3.1.11.6" evidence="1"/>
<dbReference type="EMBL" id="CP001138">
    <property type="protein sequence ID" value="ACH51839.1"/>
    <property type="molecule type" value="Genomic_DNA"/>
</dbReference>
<dbReference type="RefSeq" id="WP_000953158.1">
    <property type="nucleotide sequence ID" value="NC_011149.1"/>
</dbReference>
<dbReference type="SMR" id="B5F187"/>
<dbReference type="KEGG" id="sea:SeAg_B2661"/>
<dbReference type="HOGENOM" id="CLU_023625_3_1_6"/>
<dbReference type="Proteomes" id="UP000008819">
    <property type="component" value="Chromosome"/>
</dbReference>
<dbReference type="GO" id="GO:0005737">
    <property type="term" value="C:cytoplasm"/>
    <property type="evidence" value="ECO:0007669"/>
    <property type="project" value="UniProtKB-SubCell"/>
</dbReference>
<dbReference type="GO" id="GO:0009318">
    <property type="term" value="C:exodeoxyribonuclease VII complex"/>
    <property type="evidence" value="ECO:0007669"/>
    <property type="project" value="InterPro"/>
</dbReference>
<dbReference type="GO" id="GO:0008855">
    <property type="term" value="F:exodeoxyribonuclease VII activity"/>
    <property type="evidence" value="ECO:0007669"/>
    <property type="project" value="UniProtKB-UniRule"/>
</dbReference>
<dbReference type="GO" id="GO:0003676">
    <property type="term" value="F:nucleic acid binding"/>
    <property type="evidence" value="ECO:0007669"/>
    <property type="project" value="InterPro"/>
</dbReference>
<dbReference type="GO" id="GO:0006308">
    <property type="term" value="P:DNA catabolic process"/>
    <property type="evidence" value="ECO:0007669"/>
    <property type="project" value="UniProtKB-UniRule"/>
</dbReference>
<dbReference type="CDD" id="cd04489">
    <property type="entry name" value="ExoVII_LU_OBF"/>
    <property type="match status" value="1"/>
</dbReference>
<dbReference type="HAMAP" id="MF_00378">
    <property type="entry name" value="Exonuc_7_L"/>
    <property type="match status" value="1"/>
</dbReference>
<dbReference type="InterPro" id="IPR003753">
    <property type="entry name" value="Exonuc_VII_L"/>
</dbReference>
<dbReference type="InterPro" id="IPR020579">
    <property type="entry name" value="Exonuc_VII_lsu_C"/>
</dbReference>
<dbReference type="InterPro" id="IPR025824">
    <property type="entry name" value="OB-fold_nuc-bd_dom"/>
</dbReference>
<dbReference type="NCBIfam" id="TIGR00237">
    <property type="entry name" value="xseA"/>
    <property type="match status" value="1"/>
</dbReference>
<dbReference type="PANTHER" id="PTHR30008">
    <property type="entry name" value="EXODEOXYRIBONUCLEASE 7 LARGE SUBUNIT"/>
    <property type="match status" value="1"/>
</dbReference>
<dbReference type="PANTHER" id="PTHR30008:SF0">
    <property type="entry name" value="EXODEOXYRIBONUCLEASE 7 LARGE SUBUNIT"/>
    <property type="match status" value="1"/>
</dbReference>
<dbReference type="Pfam" id="PF02601">
    <property type="entry name" value="Exonuc_VII_L"/>
    <property type="match status" value="1"/>
</dbReference>
<dbReference type="Pfam" id="PF13742">
    <property type="entry name" value="tRNA_anti_2"/>
    <property type="match status" value="1"/>
</dbReference>
<comment type="function">
    <text evidence="1">Bidirectionally degrades single-stranded DNA into large acid-insoluble oligonucleotides, which are then degraded further into small acid-soluble oligonucleotides.</text>
</comment>
<comment type="catalytic activity">
    <reaction evidence="1">
        <text>Exonucleolytic cleavage in either 5'- to 3'- or 3'- to 5'-direction to yield nucleoside 5'-phosphates.</text>
        <dbReference type="EC" id="3.1.11.6"/>
    </reaction>
</comment>
<comment type="subunit">
    <text evidence="1">Heterooligomer composed of large and small subunits.</text>
</comment>
<comment type="subcellular location">
    <subcellularLocation>
        <location evidence="1">Cytoplasm</location>
    </subcellularLocation>
</comment>
<comment type="similarity">
    <text evidence="1">Belongs to the XseA family.</text>
</comment>
<organism>
    <name type="scientific">Salmonella agona (strain SL483)</name>
    <dbReference type="NCBI Taxonomy" id="454166"/>
    <lineage>
        <taxon>Bacteria</taxon>
        <taxon>Pseudomonadati</taxon>
        <taxon>Pseudomonadota</taxon>
        <taxon>Gammaproteobacteria</taxon>
        <taxon>Enterobacterales</taxon>
        <taxon>Enterobacteriaceae</taxon>
        <taxon>Salmonella</taxon>
    </lineage>
</organism>
<keyword id="KW-0963">Cytoplasm</keyword>
<keyword id="KW-0269">Exonuclease</keyword>
<keyword id="KW-0378">Hydrolase</keyword>
<keyword id="KW-0540">Nuclease</keyword>
<feature type="chain" id="PRO_1000122080" description="Exodeoxyribonuclease 7 large subunit">
    <location>
        <begin position="1"/>
        <end position="449"/>
    </location>
</feature>
<protein>
    <recommendedName>
        <fullName evidence="1">Exodeoxyribonuclease 7 large subunit</fullName>
        <ecNumber evidence="1">3.1.11.6</ecNumber>
    </recommendedName>
    <alternativeName>
        <fullName evidence="1">Exodeoxyribonuclease VII large subunit</fullName>
        <shortName evidence="1">Exonuclease VII large subunit</shortName>
    </alternativeName>
</protein>
<reference key="1">
    <citation type="journal article" date="2011" name="J. Bacteriol.">
        <title>Comparative genomics of 28 Salmonella enterica isolates: evidence for CRISPR-mediated adaptive sublineage evolution.</title>
        <authorList>
            <person name="Fricke W.F."/>
            <person name="Mammel M.K."/>
            <person name="McDermott P.F."/>
            <person name="Tartera C."/>
            <person name="White D.G."/>
            <person name="Leclerc J.E."/>
            <person name="Ravel J."/>
            <person name="Cebula T.A."/>
        </authorList>
    </citation>
    <scope>NUCLEOTIDE SEQUENCE [LARGE SCALE GENOMIC DNA]</scope>
    <source>
        <strain>SL483</strain>
    </source>
</reference>
<name>EX7L_SALA4</name>